<protein>
    <recommendedName>
        <fullName>Cytochrome c</fullName>
    </recommendedName>
</protein>
<evidence type="ECO:0000250" key="1"/>
<evidence type="ECO:0000250" key="2">
    <source>
        <dbReference type="UniProtKB" id="P62894"/>
    </source>
</evidence>
<evidence type="ECO:0000250" key="3">
    <source>
        <dbReference type="UniProtKB" id="P62897"/>
    </source>
</evidence>
<evidence type="ECO:0000269" key="4">
    <source>
    </source>
</evidence>
<evidence type="ECO:0000305" key="5"/>
<organism>
    <name type="scientific">Canis lupus familiaris</name>
    <name type="common">Dog</name>
    <name type="synonym">Canis familiaris</name>
    <dbReference type="NCBI Taxonomy" id="9615"/>
    <lineage>
        <taxon>Eukaryota</taxon>
        <taxon>Metazoa</taxon>
        <taxon>Chordata</taxon>
        <taxon>Craniata</taxon>
        <taxon>Vertebrata</taxon>
        <taxon>Euteleostomi</taxon>
        <taxon>Mammalia</taxon>
        <taxon>Eutheria</taxon>
        <taxon>Laurasiatheria</taxon>
        <taxon>Carnivora</taxon>
        <taxon>Caniformia</taxon>
        <taxon>Canidae</taxon>
        <taxon>Canis</taxon>
    </lineage>
</organism>
<gene>
    <name type="primary">CYCS</name>
    <name type="synonym">CYC</name>
</gene>
<feature type="initiator methionine" description="Removed" evidence="4">
    <location>
        <position position="1"/>
    </location>
</feature>
<feature type="chain" id="PRO_0000108211" description="Cytochrome c">
    <location>
        <begin position="2"/>
        <end position="105"/>
    </location>
</feature>
<feature type="binding site" description="covalent">
    <location>
        <position position="15"/>
    </location>
    <ligand>
        <name>heme c</name>
        <dbReference type="ChEBI" id="CHEBI:61717"/>
    </ligand>
</feature>
<feature type="binding site" description="covalent">
    <location>
        <position position="18"/>
    </location>
    <ligand>
        <name>heme c</name>
        <dbReference type="ChEBI" id="CHEBI:61717"/>
    </ligand>
</feature>
<feature type="binding site" description="axial binding residue">
    <location>
        <position position="19"/>
    </location>
    <ligand>
        <name>heme c</name>
        <dbReference type="ChEBI" id="CHEBI:61717"/>
    </ligand>
    <ligandPart>
        <name>Fe</name>
        <dbReference type="ChEBI" id="CHEBI:18248"/>
    </ligandPart>
</feature>
<feature type="binding site" description="axial binding residue">
    <location>
        <position position="81"/>
    </location>
    <ligand>
        <name>heme c</name>
        <dbReference type="ChEBI" id="CHEBI:61717"/>
    </ligand>
    <ligandPart>
        <name>Fe</name>
        <dbReference type="ChEBI" id="CHEBI:18248"/>
    </ligandPart>
</feature>
<feature type="modified residue" description="N-acetylglycine" evidence="4">
    <location>
        <position position="2"/>
    </location>
</feature>
<feature type="modified residue" description="Phosphotyrosine" evidence="2">
    <location>
        <position position="49"/>
    </location>
</feature>
<feature type="modified residue" description="N6-succinyllysine" evidence="3">
    <location>
        <position position="56"/>
    </location>
</feature>
<feature type="modified residue" description="N6-acetyllysine; alternate" evidence="3">
    <location>
        <position position="73"/>
    </location>
</feature>
<feature type="modified residue" description="N6-succinyllysine; alternate" evidence="3">
    <location>
        <position position="73"/>
    </location>
</feature>
<feature type="modified residue" description="Phosphotyrosine" evidence="2">
    <location>
        <position position="98"/>
    </location>
</feature>
<feature type="modified residue" description="N6-acetyllysine" evidence="3">
    <location>
        <position position="100"/>
    </location>
</feature>
<keyword id="KW-0007">Acetylation</keyword>
<keyword id="KW-0053">Apoptosis</keyword>
<keyword id="KW-0903">Direct protein sequencing</keyword>
<keyword id="KW-0249">Electron transport</keyword>
<keyword id="KW-0349">Heme</keyword>
<keyword id="KW-0408">Iron</keyword>
<keyword id="KW-0479">Metal-binding</keyword>
<keyword id="KW-0496">Mitochondrion</keyword>
<keyword id="KW-0597">Phosphoprotein</keyword>
<keyword id="KW-1185">Reference proteome</keyword>
<keyword id="KW-0679">Respiratory chain</keyword>
<keyword id="KW-0813">Transport</keyword>
<proteinExistence type="evidence at protein level"/>
<name>CYC_CANLF</name>
<sequence>MGDVEKGKKIFVQKCAQCHTVEKGGKHKTGPNLHGLFGRKTGQAPGFSYTDANKNKGITWGEETLMEYLENPKKYIPGTKMIFAGIKKTGERADLIAYLKKATKE</sequence>
<dbReference type="PIR" id="A00010">
    <property type="entry name" value="CCDG"/>
</dbReference>
<dbReference type="RefSeq" id="NP_001183974.1">
    <property type="nucleotide sequence ID" value="NM_001197045.1"/>
</dbReference>
<dbReference type="SMR" id="P00011"/>
<dbReference type="FunCoup" id="P00011">
    <property type="interactions" value="1812"/>
</dbReference>
<dbReference type="STRING" id="9615.ENSCAFP00000004225"/>
<dbReference type="iPTMnet" id="P00011"/>
<dbReference type="SwissPalm" id="P00011"/>
<dbReference type="PaxDb" id="9612-ENSCAFP00000004225"/>
<dbReference type="Ensembl" id="ENSCAFT00000097490.1">
    <property type="protein sequence ID" value="ENSCAFP00000071485.1"/>
    <property type="gene ID" value="ENSCAFG00000057599.1"/>
</dbReference>
<dbReference type="Ensembl" id="ENSCAFT00030009189.1">
    <property type="protein sequence ID" value="ENSCAFP00030008057.1"/>
    <property type="gene ID" value="ENSCAFG00030004991.1"/>
</dbReference>
<dbReference type="Ensembl" id="ENSCAFT00040015592.1">
    <property type="protein sequence ID" value="ENSCAFP00040013514.1"/>
    <property type="gene ID" value="ENSCAFG00040008341.1"/>
</dbReference>
<dbReference type="Ensembl" id="ENSCAFT00845018890.1">
    <property type="protein sequence ID" value="ENSCAFP00845014758.1"/>
    <property type="gene ID" value="ENSCAFG00845010713.1"/>
</dbReference>
<dbReference type="GeneID" id="475258"/>
<dbReference type="KEGG" id="cfa:475258"/>
<dbReference type="CTD" id="54205"/>
<dbReference type="VEuPathDB" id="HostDB:ENSCAFG00845010713"/>
<dbReference type="eggNOG" id="KOG3453">
    <property type="taxonomic scope" value="Eukaryota"/>
</dbReference>
<dbReference type="GeneTree" id="ENSGT00390000009405"/>
<dbReference type="HOGENOM" id="CLU_060944_3_0_1"/>
<dbReference type="InParanoid" id="P00011"/>
<dbReference type="OMA" id="KARCAQC"/>
<dbReference type="OrthoDB" id="449280at2759"/>
<dbReference type="TreeFam" id="TF300226"/>
<dbReference type="Reactome" id="R-CFA-111457">
    <property type="pathway name" value="Release of apoptotic factors from the mitochondria"/>
</dbReference>
<dbReference type="Reactome" id="R-CFA-111458">
    <property type="pathway name" value="Formation of apoptosome"/>
</dbReference>
<dbReference type="Reactome" id="R-CFA-111459">
    <property type="pathway name" value="Activation of caspases through apoptosome-mediated cleavage"/>
</dbReference>
<dbReference type="Reactome" id="R-CFA-3299685">
    <property type="pathway name" value="Detoxification of Reactive Oxygen Species"/>
</dbReference>
<dbReference type="Reactome" id="R-CFA-5620971">
    <property type="pathway name" value="Pyroptosis"/>
</dbReference>
<dbReference type="Reactome" id="R-CFA-5628897">
    <property type="pathway name" value="TP53 Regulates Metabolic Genes"/>
</dbReference>
<dbReference type="Reactome" id="R-CFA-611105">
    <property type="pathway name" value="Respiratory electron transport"/>
</dbReference>
<dbReference type="Reactome" id="R-CFA-9627069">
    <property type="pathway name" value="Regulation of the apoptosome activity"/>
</dbReference>
<dbReference type="Reactome" id="R-CFA-9707564">
    <property type="pathway name" value="Cytoprotection by HMOX1"/>
</dbReference>
<dbReference type="Proteomes" id="UP000002254">
    <property type="component" value="Chromosome 14"/>
</dbReference>
<dbReference type="Proteomes" id="UP000694429">
    <property type="component" value="Chromosome 14"/>
</dbReference>
<dbReference type="Proteomes" id="UP000694542">
    <property type="component" value="Chromosome 14"/>
</dbReference>
<dbReference type="Proteomes" id="UP000805418">
    <property type="component" value="Chromosome 14"/>
</dbReference>
<dbReference type="Bgee" id="ENSCAFG00000002856">
    <property type="expression patterns" value="Expressed in cardiac muscle of left ventricle and 48 other cell types or tissues"/>
</dbReference>
<dbReference type="GO" id="GO:0043293">
    <property type="term" value="C:apoptosome"/>
    <property type="evidence" value="ECO:0007669"/>
    <property type="project" value="Ensembl"/>
</dbReference>
<dbReference type="GO" id="GO:0005829">
    <property type="term" value="C:cytosol"/>
    <property type="evidence" value="ECO:0000250"/>
    <property type="project" value="UniProtKB"/>
</dbReference>
<dbReference type="GO" id="GO:0005758">
    <property type="term" value="C:mitochondrial intermembrane space"/>
    <property type="evidence" value="ECO:0000318"/>
    <property type="project" value="GO_Central"/>
</dbReference>
<dbReference type="GO" id="GO:0005634">
    <property type="term" value="C:nucleus"/>
    <property type="evidence" value="ECO:0007669"/>
    <property type="project" value="Ensembl"/>
</dbReference>
<dbReference type="GO" id="GO:0009055">
    <property type="term" value="F:electron transfer activity"/>
    <property type="evidence" value="ECO:0000318"/>
    <property type="project" value="GO_Central"/>
</dbReference>
<dbReference type="GO" id="GO:0020037">
    <property type="term" value="F:heme binding"/>
    <property type="evidence" value="ECO:0007669"/>
    <property type="project" value="InterPro"/>
</dbReference>
<dbReference type="GO" id="GO:0046872">
    <property type="term" value="F:metal ion binding"/>
    <property type="evidence" value="ECO:0007669"/>
    <property type="project" value="UniProtKB-KW"/>
</dbReference>
<dbReference type="GO" id="GO:0006915">
    <property type="term" value="P:apoptotic process"/>
    <property type="evidence" value="ECO:0007669"/>
    <property type="project" value="UniProtKB-KW"/>
</dbReference>
<dbReference type="GO" id="GO:0006123">
    <property type="term" value="P:mitochondrial electron transport, cytochrome c to oxygen"/>
    <property type="evidence" value="ECO:0000318"/>
    <property type="project" value="GO_Central"/>
</dbReference>
<dbReference type="GO" id="GO:0006122">
    <property type="term" value="P:mitochondrial electron transport, ubiquinol to cytochrome c"/>
    <property type="evidence" value="ECO:0000318"/>
    <property type="project" value="GO_Central"/>
</dbReference>
<dbReference type="FunFam" id="1.10.760.10:FF:000008">
    <property type="entry name" value="Cytochrome c"/>
    <property type="match status" value="1"/>
</dbReference>
<dbReference type="Gene3D" id="1.10.760.10">
    <property type="entry name" value="Cytochrome c-like domain"/>
    <property type="match status" value="1"/>
</dbReference>
<dbReference type="InterPro" id="IPR009056">
    <property type="entry name" value="Cyt_c-like_dom"/>
</dbReference>
<dbReference type="InterPro" id="IPR036909">
    <property type="entry name" value="Cyt_c-like_dom_sf"/>
</dbReference>
<dbReference type="InterPro" id="IPR002327">
    <property type="entry name" value="Cyt_c_1A/1B"/>
</dbReference>
<dbReference type="PANTHER" id="PTHR11961">
    <property type="entry name" value="CYTOCHROME C"/>
    <property type="match status" value="1"/>
</dbReference>
<dbReference type="Pfam" id="PF00034">
    <property type="entry name" value="Cytochrom_C"/>
    <property type="match status" value="1"/>
</dbReference>
<dbReference type="PRINTS" id="PR00604">
    <property type="entry name" value="CYTCHRMECIAB"/>
</dbReference>
<dbReference type="SUPFAM" id="SSF46626">
    <property type="entry name" value="Cytochrome c"/>
    <property type="match status" value="1"/>
</dbReference>
<dbReference type="PROSITE" id="PS51007">
    <property type="entry name" value="CYTC"/>
    <property type="match status" value="1"/>
</dbReference>
<comment type="function">
    <text>Electron carrier protein. The oxidized form of the cytochrome c heme group can accept an electron from the heme group of the cytochrome c1 subunit of cytochrome reductase. Cytochrome c then transfers this electron to the cytochrome oxidase complex, the final protein carrier in the mitochondrial electron-transport chain.</text>
</comment>
<comment type="function">
    <text evidence="1">Plays a role in apoptosis. Suppression of the anti-apoptotic members or activation of the pro-apoptotic members of the Bcl-2 family leads to altered mitochondrial membrane permeability resulting in release of cytochrome c into the cytosol. Binding of cytochrome c to Apaf-1 triggers the activation of caspase-9, which then accelerates apoptosis by activating other caspases (By similarity).</text>
</comment>
<comment type="subcellular location">
    <subcellularLocation>
        <location>Mitochondrion intermembrane space</location>
    </subcellularLocation>
    <text>Loosely associated with the inner membrane.</text>
</comment>
<comment type="PTM">
    <text>Binds 1 heme c group covalently per subunit.</text>
</comment>
<comment type="PTM">
    <text evidence="1">Phosphorylation at Tyr-49 and Tyr-98 both reduce by half the turnover in the reaction with cytochrome c oxidase, down-regulating mitochondrial respiration.</text>
</comment>
<comment type="similarity">
    <text evidence="5">Belongs to the cytochrome c family.</text>
</comment>
<comment type="online information" name="Protein Spotlight">
    <link uri="https://www.proteinspotlight.org/back_issues/076"/>
    <text>Life shuttle - Issue 76 of November 2006</text>
</comment>
<accession>P00011</accession>
<reference key="1">
    <citation type="journal article" date="1965" name="J. Biol. Chem.">
        <title>Amino acid sequence of dog heart cytochrome c.</title>
        <authorList>
            <person name="McDowall M.A."/>
            <person name="Smith E.L."/>
        </authorList>
    </citation>
    <scope>PROTEIN SEQUENCE OF 2-105</scope>
    <scope>ACETYLATION AT GLY-2</scope>
</reference>